<comment type="subcellular location">
    <subcellularLocation>
        <location>Secreted</location>
        <location>Cell wall</location>
    </subcellularLocation>
</comment>
<comment type="allergen">
    <text>Causes an allergic reaction in human.</text>
</comment>
<dbReference type="EMBL" id="X96486">
    <property type="protein sequence ID" value="CAA65341.1"/>
    <property type="molecule type" value="mRNA"/>
</dbReference>
<dbReference type="PDB" id="2P9W">
    <property type="method" value="X-ray"/>
    <property type="resolution" value="1.35 A"/>
    <property type="chains" value="A=23-350"/>
</dbReference>
<dbReference type="PDBsum" id="2P9W"/>
<dbReference type="SMR" id="Q01940"/>
<dbReference type="Allergome" id="3364">
    <property type="allergen name" value="Mala s 1.0101"/>
</dbReference>
<dbReference type="Allergome" id="467">
    <property type="allergen name" value="Mala s 1"/>
</dbReference>
<dbReference type="ABCD" id="Q01940">
    <property type="antibodies" value="15 sequenced antibodies"/>
</dbReference>
<dbReference type="GO" id="GO:0005576">
    <property type="term" value="C:extracellular region"/>
    <property type="evidence" value="ECO:0007669"/>
    <property type="project" value="UniProtKB-KW"/>
</dbReference>
<dbReference type="CDD" id="cd12811">
    <property type="entry name" value="MALA"/>
    <property type="match status" value="1"/>
</dbReference>
<dbReference type="InterPro" id="IPR054550">
    <property type="entry name" value="Mala_s_1-like"/>
</dbReference>
<dbReference type="Pfam" id="PF22701">
    <property type="entry name" value="Mala_s_1-like"/>
    <property type="match status" value="1"/>
</dbReference>
<dbReference type="SUPFAM" id="SSF63825">
    <property type="entry name" value="YWTD domain"/>
    <property type="match status" value="1"/>
</dbReference>
<organism>
    <name type="scientific">Malassezia furfur</name>
    <name type="common">Pityriasis versicolor infection agent</name>
    <name type="synonym">Pityrosporum furfur</name>
    <dbReference type="NCBI Taxonomy" id="55194"/>
    <lineage>
        <taxon>Eukaryota</taxon>
        <taxon>Fungi</taxon>
        <taxon>Dikarya</taxon>
        <taxon>Basidiomycota</taxon>
        <taxon>Ustilaginomycotina</taxon>
        <taxon>Malasseziomycetes</taxon>
        <taxon>Malasseziales</taxon>
        <taxon>Malasseziaceae</taxon>
        <taxon>Malassezia</taxon>
    </lineage>
</organism>
<feature type="signal peptide">
    <location>
        <begin position="1"/>
        <end position="22"/>
    </location>
</feature>
<feature type="chain" id="PRO_0000021633" description="Major allergen Mal f 1">
    <location>
        <begin position="23"/>
        <end position="350"/>
    </location>
</feature>
<proteinExistence type="evidence at protein level"/>
<accession>Q01940</accession>
<reference key="1">
    <citation type="journal article" date="1997" name="Eur. J. Biochem.">
        <title>The complete cDNA sequence and expression of the first major allergenic protein of Malassezia furfur, Mal f 1.</title>
        <authorList>
            <person name="Schmidt M."/>
            <person name="Zargari A."/>
            <person name="Holt P."/>
            <person name="Lindbom L."/>
            <person name="Hellman U."/>
            <person name="Whitley P."/>
            <person name="van der Ploeg I."/>
            <person name="Haerfast B."/>
            <person name="Scheynius A."/>
        </authorList>
    </citation>
    <scope>NUCLEOTIDE SEQUENCE [MRNA]</scope>
    <scope>PARTIAL PROTEIN SEQUENCE</scope>
    <source>
        <strain>ATCC 42132 / M1154/77</strain>
    </source>
</reference>
<sequence length="350" mass="38180">MRYSTVLAALALLGTSAVSVLAALPDQIDVKVKNLTPEDTIYDRTRQVFYQSNLYKGRIEVYNPKTQSHFNVVIDGASSNGDGEQQMSGLSLLTHDNSKRLFAVMKNAKSFNFADQSSHGASSFHSFNLPLSENSKPVWSVNFEKVQDEFEKKAGKRPFGVVQSAQDRDGNSYVAFALGMPAIARVSADGKTVSTFAWESGNGGQRPGYSGITFDPHSNKLIAFGGPRALTAFDVSKPYAWPEPVKINGDFGTLSGTEKIVTVPVGNESVLVGARAPYAISFRSWDNWKSANIKKTKRSELQNSGFTAVADYYQGSEQGLYAVSAFFDNGAHGGRSDYPLYKLDNSILNF</sequence>
<protein>
    <recommendedName>
        <fullName>Major allergen Mal f 1</fullName>
    </recommendedName>
    <alternativeName>
        <fullName>Allergen Pit o 1</fullName>
    </alternativeName>
    <allergenName>Mal f 1</allergenName>
</protein>
<keyword id="KW-0002">3D-structure</keyword>
<keyword id="KW-0020">Allergen</keyword>
<keyword id="KW-0134">Cell wall</keyword>
<keyword id="KW-0903">Direct protein sequencing</keyword>
<keyword id="KW-0964">Secreted</keyword>
<keyword id="KW-0732">Signal</keyword>
<name>MALF1_MALFU</name>